<evidence type="ECO:0000250" key="1">
    <source>
        <dbReference type="UniProtKB" id="P35056"/>
    </source>
</evidence>
<evidence type="ECO:0000250" key="2">
    <source>
        <dbReference type="UniProtKB" id="P50542"/>
    </source>
</evidence>
<evidence type="ECO:0000269" key="3">
    <source>
    </source>
</evidence>
<evidence type="ECO:0000269" key="4">
    <source>
    </source>
</evidence>
<evidence type="ECO:0000269" key="5">
    <source>
    </source>
</evidence>
<evidence type="ECO:0000269" key="6">
    <source>
    </source>
</evidence>
<evidence type="ECO:0000269" key="7">
    <source>
    </source>
</evidence>
<evidence type="ECO:0000269" key="8">
    <source>
    </source>
</evidence>
<evidence type="ECO:0000269" key="9">
    <source>
    </source>
</evidence>
<evidence type="ECO:0000305" key="10"/>
<evidence type="ECO:0007744" key="11">
    <source>
        <dbReference type="PDB" id="3W15"/>
    </source>
</evidence>
<evidence type="ECO:0007829" key="12">
    <source>
        <dbReference type="PDB" id="3W15"/>
    </source>
</evidence>
<comment type="function">
    <text evidence="2 4 5 7 8 9">Receptor that mediates peroxisomal import of proteins containing a C-terminal PTS2-type peroxisomal targeting signal via its interaction with PEX7 (PubMed:12167700, PubMed:23812376, PubMed:9864360). Interaction with PEX7 only takes place when PEX7 is associated with cargo proteins containing a PTS2 peroxisomal targeting signal (By similarity). PEX7 along with PTS2-containing cargo proteins are then translocated through the PEX13-PEX14 docking complex together with PEX21 (PubMed:23812376). Acts as an activator of the seryl-tRNA synthetase SES1 by increasing its binding to tRNA (PubMed:12204379, PubMed:17451428).</text>
</comment>
<comment type="subunit">
    <text evidence="3 4 5 7 8 9">Interacts with PEX7 (PubMed:11606420, PubMed:12167700, PubMed:23812376, PubMed:9864360). Interacts with PEX13 (PubMed:12167700). Interacts with SES1 (PubMed:12204379, PubMed:17451428).</text>
</comment>
<comment type="interaction">
    <interactant intactId="EBI-23549">
        <id>P50091</id>
    </interactant>
    <interactant intactId="EBI-13183">
        <id>P39108</id>
        <label>PEX7</label>
    </interactant>
    <organismsDiffer>false</organismsDiffer>
    <experiments>13</experiments>
</comment>
<comment type="interaction">
    <interactant intactId="EBI-23549">
        <id>P50091</id>
    </interactant>
    <interactant intactId="EBI-19236">
        <id>P27796</id>
        <label>POT1</label>
    </interactant>
    <organismsDiffer>false</organismsDiffer>
    <experiments>5</experiments>
</comment>
<comment type="subcellular location">
    <subcellularLocation>
        <location evidence="6 9">Cytoplasm</location>
        <location evidence="6 9">Cytosol</location>
    </subcellularLocation>
    <subcellularLocation>
        <location evidence="6 9">Peroxisome</location>
    </subcellularLocation>
    <text evidence="9">Cycles between the cytosol and the peroxisome.</text>
</comment>
<comment type="PTM">
    <text evidence="1">Monoubiquitinated at Cys-5; acts as a signal for PEX21 extraction and is required for proper export from peroxisomes and recycling.</text>
</comment>
<comment type="similarity">
    <text evidence="10">Belongs to the peroxin-21 family.</text>
</comment>
<feature type="chain" id="PRO_0000202855" description="Peroxisomal protein PEX21">
    <location>
        <begin position="1"/>
        <end position="288"/>
    </location>
</feature>
<feature type="cross-link" description="Glycyl cysteine thioester (Cys-Gly) (interchain with G-Cter in ubiquitin)" evidence="1">
    <location>
        <position position="5"/>
    </location>
</feature>
<feature type="mutagenesis site" description="Does not affect formation of a ternary complex composed of PEX21 and PEX7 along with PTS2-containing cargo proteins." evidence="8">
    <original>I</original>
    <variation>D</variation>
    <location>
        <position position="202"/>
    </location>
</feature>
<feature type="mutagenesis site" description="Does not affect formation of a ternary complex composed of PEX21 and PEX7 along with PTS2-containing cargo proteins." evidence="8">
    <original>K</original>
    <variation>E</variation>
    <location>
        <position position="230"/>
    </location>
</feature>
<feature type="mutagenesis site" description="Abolished interaction with PEX7." evidence="3">
    <original>S</original>
    <variation>F</variation>
    <location>
        <position position="234"/>
    </location>
</feature>
<feature type="mutagenesis site" description="Decreased formation of a ternary complex composed of PEX21 and PEX7 along with PTS2-containing cargo proteins." evidence="8">
    <original>F</original>
    <variation>A</variation>
    <location>
        <position position="236"/>
    </location>
</feature>
<feature type="helix" evidence="12">
    <location>
        <begin position="198"/>
        <end position="209"/>
    </location>
</feature>
<feature type="helix" evidence="12">
    <location>
        <begin position="225"/>
        <end position="232"/>
    </location>
</feature>
<feature type="helix" evidence="12">
    <location>
        <begin position="235"/>
        <end position="244"/>
    </location>
</feature>
<feature type="strand" evidence="12">
    <location>
        <begin position="247"/>
        <end position="250"/>
    </location>
</feature>
<feature type="strand" evidence="12">
    <location>
        <begin position="262"/>
        <end position="264"/>
    </location>
</feature>
<feature type="turn" evidence="12">
    <location>
        <begin position="265"/>
        <end position="267"/>
    </location>
</feature>
<feature type="strand" evidence="12">
    <location>
        <begin position="269"/>
        <end position="272"/>
    </location>
</feature>
<name>PEX21_YEAST</name>
<reference key="1">
    <citation type="journal article" date="1996" name="Yeast">
        <title>Sequence analysis of the 43 kb CRM1-YLM9-PET54-DIE2-SMI1-PHO81-YHB4-PFK1 region from the right arm of Saccharomyces cerevisiae chromosome VII.</title>
        <authorList>
            <person name="van der Aart Q.J.M."/>
            <person name="Kleine K."/>
            <person name="Steensma H.Y."/>
        </authorList>
    </citation>
    <scope>NUCLEOTIDE SEQUENCE [GENOMIC DNA]</scope>
    <source>
        <strain>ATCC 204508 / S288c</strain>
    </source>
</reference>
<reference key="2">
    <citation type="journal article" date="1997" name="Nature">
        <title>The nucleotide sequence of Saccharomyces cerevisiae chromosome VII.</title>
        <authorList>
            <person name="Tettelin H."/>
            <person name="Agostoni-Carbone M.L."/>
            <person name="Albermann K."/>
            <person name="Albers M."/>
            <person name="Arroyo J."/>
            <person name="Backes U."/>
            <person name="Barreiros T."/>
            <person name="Bertani I."/>
            <person name="Bjourson A.J."/>
            <person name="Brueckner M."/>
            <person name="Bruschi C.V."/>
            <person name="Carignani G."/>
            <person name="Castagnoli L."/>
            <person name="Cerdan E."/>
            <person name="Clemente M.L."/>
            <person name="Coblenz A."/>
            <person name="Coglievina M."/>
            <person name="Coissac E."/>
            <person name="Defoor E."/>
            <person name="Del Bino S."/>
            <person name="Delius H."/>
            <person name="Delneri D."/>
            <person name="de Wergifosse P."/>
            <person name="Dujon B."/>
            <person name="Durand P."/>
            <person name="Entian K.-D."/>
            <person name="Eraso P."/>
            <person name="Escribano V."/>
            <person name="Fabiani L."/>
            <person name="Fartmann B."/>
            <person name="Feroli F."/>
            <person name="Feuermann M."/>
            <person name="Frontali L."/>
            <person name="Garcia-Gonzalez M."/>
            <person name="Garcia-Saez M.I."/>
            <person name="Goffeau A."/>
            <person name="Guerreiro P."/>
            <person name="Hani J."/>
            <person name="Hansen M."/>
            <person name="Hebling U."/>
            <person name="Hernandez K."/>
            <person name="Heumann K."/>
            <person name="Hilger F."/>
            <person name="Hofmann B."/>
            <person name="Indge K.J."/>
            <person name="James C.M."/>
            <person name="Klima R."/>
            <person name="Koetter P."/>
            <person name="Kramer B."/>
            <person name="Kramer W."/>
            <person name="Lauquin G."/>
            <person name="Leuther H."/>
            <person name="Louis E.J."/>
            <person name="Maillier E."/>
            <person name="Marconi A."/>
            <person name="Martegani E."/>
            <person name="Mazon M.J."/>
            <person name="Mazzoni C."/>
            <person name="McReynolds A.D.K."/>
            <person name="Melchioretto P."/>
            <person name="Mewes H.-W."/>
            <person name="Minenkova O."/>
            <person name="Mueller-Auer S."/>
            <person name="Nawrocki A."/>
            <person name="Netter P."/>
            <person name="Neu R."/>
            <person name="Nombela C."/>
            <person name="Oliver S.G."/>
            <person name="Panzeri L."/>
            <person name="Paoluzi S."/>
            <person name="Plevani P."/>
            <person name="Portetelle D."/>
            <person name="Portillo F."/>
            <person name="Potier S."/>
            <person name="Purnelle B."/>
            <person name="Rieger M."/>
            <person name="Riles L."/>
            <person name="Rinaldi T."/>
            <person name="Robben J."/>
            <person name="Rodrigues-Pousada C."/>
            <person name="Rodriguez-Belmonte E."/>
            <person name="Rodriguez-Torres A.M."/>
            <person name="Rose M."/>
            <person name="Ruzzi M."/>
            <person name="Saliola M."/>
            <person name="Sanchez-Perez M."/>
            <person name="Schaefer B."/>
            <person name="Schaefer M."/>
            <person name="Scharfe M."/>
            <person name="Schmidheini T."/>
            <person name="Schreer A."/>
            <person name="Skala J."/>
            <person name="Souciet J.-L."/>
            <person name="Steensma H.Y."/>
            <person name="Talla E."/>
            <person name="Thierry A."/>
            <person name="Vandenbol M."/>
            <person name="van der Aart Q.J.M."/>
            <person name="Van Dyck L."/>
            <person name="Vanoni M."/>
            <person name="Verhasselt P."/>
            <person name="Voet M."/>
            <person name="Volckaert G."/>
            <person name="Wambutt R."/>
            <person name="Watson M.D."/>
            <person name="Weber N."/>
            <person name="Wedler E."/>
            <person name="Wedler H."/>
            <person name="Wipfli P."/>
            <person name="Wolf K."/>
            <person name="Wright L.F."/>
            <person name="Zaccaria P."/>
            <person name="Zimmermann M."/>
            <person name="Zollner A."/>
            <person name="Kleine K."/>
        </authorList>
    </citation>
    <scope>NUCLEOTIDE SEQUENCE [LARGE SCALE GENOMIC DNA]</scope>
    <source>
        <strain>ATCC 204508 / S288c</strain>
    </source>
</reference>
<reference key="3">
    <citation type="journal article" date="2014" name="G3 (Bethesda)">
        <title>The reference genome sequence of Saccharomyces cerevisiae: Then and now.</title>
        <authorList>
            <person name="Engel S.R."/>
            <person name="Dietrich F.S."/>
            <person name="Fisk D.G."/>
            <person name="Binkley G."/>
            <person name="Balakrishnan R."/>
            <person name="Costanzo M.C."/>
            <person name="Dwight S.S."/>
            <person name="Hitz B.C."/>
            <person name="Karra K."/>
            <person name="Nash R.S."/>
            <person name="Weng S."/>
            <person name="Wong E.D."/>
            <person name="Lloyd P."/>
            <person name="Skrzypek M.S."/>
            <person name="Miyasato S.R."/>
            <person name="Simison M."/>
            <person name="Cherry J.M."/>
        </authorList>
    </citation>
    <scope>GENOME REANNOTATION</scope>
    <source>
        <strain>ATCC 204508 / S288c</strain>
    </source>
</reference>
<reference key="4">
    <citation type="journal article" date="2007" name="Genome Res.">
        <title>Approaching a complete repository of sequence-verified protein-encoding clones for Saccharomyces cerevisiae.</title>
        <authorList>
            <person name="Hu Y."/>
            <person name="Rolfs A."/>
            <person name="Bhullar B."/>
            <person name="Murthy T.V.S."/>
            <person name="Zhu C."/>
            <person name="Berger M.F."/>
            <person name="Camargo A.A."/>
            <person name="Kelley F."/>
            <person name="McCarron S."/>
            <person name="Jepson D."/>
            <person name="Richardson A."/>
            <person name="Raphael J."/>
            <person name="Moreira D."/>
            <person name="Taycher E."/>
            <person name="Zuo D."/>
            <person name="Mohr S."/>
            <person name="Kane M.F."/>
            <person name="Williamson J."/>
            <person name="Simpson A.J.G."/>
            <person name="Bulyk M.L."/>
            <person name="Harlow E."/>
            <person name="Marsischky G."/>
            <person name="Kolodner R.D."/>
            <person name="LaBaer J."/>
        </authorList>
    </citation>
    <scope>NUCLEOTIDE SEQUENCE [GENOMIC DNA]</scope>
    <source>
        <strain>ATCC 204508 / S288c</strain>
    </source>
</reference>
<reference key="5">
    <citation type="journal article" date="1997" name="Yeast">
        <title>Sequencing of a 9.9 kb segment on the right arm of yeast chromosome VII reveals four open reading frames, including PFK1, the gene coding for succinyl-CoA synthetase (beta-chain) and two ORFs sharing homology with ORFs of the yeast chromosome VIII.</title>
        <authorList>
            <person name="Guerreiro P."/>
            <person name="Azevedo D."/>
            <person name="Barreiros T."/>
            <person name="Rodrigues-Pousada C."/>
        </authorList>
    </citation>
    <scope>NUCLEOTIDE SEQUENCE [GENOMIC DNA] OF 123-288</scope>
    <source>
        <strain>ATCC 204508 / S288c</strain>
    </source>
</reference>
<reference key="6">
    <citation type="journal article" date="1998" name="J. Cell Biol.">
        <title>Pex18p and Pex21p, a novel pair of related peroxins essential for peroxisomal targeting by the PTS2 pathway.</title>
        <authorList>
            <person name="Purdue P.E."/>
            <person name="Yang X."/>
            <person name="Lazarow P.B."/>
        </authorList>
    </citation>
    <scope>FUNCTION</scope>
    <scope>INTERACTION WITH PEX7</scope>
</reference>
<reference key="7">
    <citation type="journal article" date="2001" name="EMBO Rep.">
        <title>Yarrowia lipolytica Pex20p, Saccharomyces cerevisiae Pex18p/Pex21p and mammalian Pex5pL fulfil a common function in the early steps of the peroxisomal PTS2 import pathway.</title>
        <authorList>
            <person name="Einwaechter H."/>
            <person name="Sowinski S."/>
            <person name="Kunau W.H."/>
            <person name="Schliebs W."/>
        </authorList>
    </citation>
    <scope>INTERACTION WITH PEX7</scope>
    <scope>MUTAGENESIS OF SER-234</scope>
</reference>
<reference key="8">
    <citation type="journal article" date="2002" name="FEMS Microbiol. Lett.">
        <title>Identifying Pex21p as a protein that specifically interacts with yeast seryl-tRNA synthetase.</title>
        <authorList>
            <person name="Rocak S."/>
            <person name="Landeka I."/>
            <person name="Weygand-Durasevic I."/>
        </authorList>
    </citation>
    <scope>FUNCTION</scope>
    <scope>INTERACTION WITH SES1</scope>
</reference>
<reference key="9">
    <citation type="journal article" date="2002" name="Mol. Cell. Biol.">
        <title>Interactions of Pex7p and Pex18p/Pex21p with the peroxisomal docking machinery: implications for the first steps in PTS2 protein import.</title>
        <authorList>
            <person name="Stein K."/>
            <person name="Schell-Steven A."/>
            <person name="Erdmann R."/>
            <person name="Rottensteiner H."/>
        </authorList>
    </citation>
    <scope>FUNCTION</scope>
    <scope>INTERACTION WITH PEX7 AND PEX13</scope>
</reference>
<reference key="10">
    <citation type="journal article" date="2003" name="Nature">
        <title>Global analysis of protein localization in budding yeast.</title>
        <authorList>
            <person name="Huh W.-K."/>
            <person name="Falvo J.V."/>
            <person name="Gerke L.C."/>
            <person name="Carroll A.S."/>
            <person name="Howson R.W."/>
            <person name="Weissman J.S."/>
            <person name="O'Shea E.K."/>
        </authorList>
    </citation>
    <scope>SUBCELLULAR LOCATION [LARGE SCALE ANALYSIS]</scope>
</reference>
<reference key="11">
    <citation type="journal article" date="2007" name="FEBS J.">
        <title>Peroxin Pex21p interacts with the C-terminal noncatalytic domain of yeast seryl-tRNA synthetase and forms a specific ternary complex with tRNA(Ser).</title>
        <authorList>
            <person name="Godinic V."/>
            <person name="Mocibob M."/>
            <person name="Rocak S."/>
            <person name="Ibba M."/>
            <person name="Weygand-Durasevic I."/>
        </authorList>
    </citation>
    <scope>FUNCTION</scope>
    <scope>INTERACTION WITH SES1</scope>
</reference>
<reference key="12">
    <citation type="journal article" date="2008" name="Mol. Cell. Proteomics">
        <title>A multidimensional chromatography technology for in-depth phosphoproteome analysis.</title>
        <authorList>
            <person name="Albuquerque C.P."/>
            <person name="Smolka M.B."/>
            <person name="Payne S.H."/>
            <person name="Bafna V."/>
            <person name="Eng J."/>
            <person name="Zhou H."/>
        </authorList>
    </citation>
    <scope>IDENTIFICATION BY MASS SPECTROMETRY [LARGE SCALE ANALYSIS]</scope>
</reference>
<reference evidence="11" key="13">
    <citation type="journal article" date="2013" name="Nat. Struct. Mol. Biol.">
        <title>Crystal structure of peroxisomal targeting signal-2 bound to its receptor complex Pex7p-Pex21p.</title>
        <authorList>
            <person name="Pan D."/>
            <person name="Nakatsu T."/>
            <person name="Kato H."/>
        </authorList>
    </citation>
    <scope>X-RAY CRYSTALLOGRAPHY (1.80 ANGSTROMS) OF 190-288 IN COMPLEX WITH PEX7 AND PTS2-TYPE PEROXISOMAL TARGETING SIGNAL</scope>
    <scope>FUNCTION</scope>
    <scope>INTERACTION WITH PEX7</scope>
    <scope>MUTAGENESIS OF ILE-202; LYS-230 AND PHE-236</scope>
</reference>
<sequence>MPSVCHTSPIEKIIQQGHRIQNDSLIPSKRTKLAHTELTAHYATEDSHVEKHFLHNGSNFDGIDNVRYQNQPSPLTFITPNNTVDSSDWVPQFSSMKIDDSLEFSSEYKRLYSNYESQQRLNSSRQHLPFKNCMIRKTSCTYPPQKTLRQQRQGNRDNPTDAFQFDAEFQVLEREIQKERYEPITRRDEKWFDQDQSELQRIATDIVKCCTPPPSSASSSSTLSSSVESKLSESKFIQLMRNISSGDVTLKKNADGNSASELFSSNNGELVGNRHIFVKDEIHKDILD</sequence>
<keyword id="KW-0002">3D-structure</keyword>
<keyword id="KW-0963">Cytoplasm</keyword>
<keyword id="KW-0576">Peroxisome</keyword>
<keyword id="KW-0653">Protein transport</keyword>
<keyword id="KW-1185">Reference proteome</keyword>
<keyword id="KW-0882">Thioester bond</keyword>
<keyword id="KW-0813">Transport</keyword>
<keyword id="KW-0832">Ubl conjugation</keyword>
<gene>
    <name type="primary">PEX21</name>
    <name type="ordered locus">YGR239C</name>
    <name type="ORF">G8593</name>
</gene>
<accession>P50091</accession>
<accession>D6VV19</accession>
<accession>O11855</accession>
<accession>Q6Q597</accession>
<proteinExistence type="evidence at protein level"/>
<dbReference type="EMBL" id="X87941">
    <property type="protein sequence ID" value="CAA61191.1"/>
    <property type="molecule type" value="Genomic_DNA"/>
</dbReference>
<dbReference type="EMBL" id="Z73024">
    <property type="protein sequence ID" value="CAA97267.1"/>
    <property type="molecule type" value="Genomic_DNA"/>
</dbReference>
<dbReference type="EMBL" id="Z73025">
    <property type="protein sequence ID" value="CAA97269.1"/>
    <property type="molecule type" value="Genomic_DNA"/>
</dbReference>
<dbReference type="EMBL" id="AY558277">
    <property type="protein sequence ID" value="AAS56603.1"/>
    <property type="molecule type" value="Genomic_DNA"/>
</dbReference>
<dbReference type="EMBL" id="BK006941">
    <property type="protein sequence ID" value="DAA08330.1"/>
    <property type="molecule type" value="Genomic_DNA"/>
</dbReference>
<dbReference type="PIR" id="S57706">
    <property type="entry name" value="S57706"/>
</dbReference>
<dbReference type="RefSeq" id="NP_011755.3">
    <property type="nucleotide sequence ID" value="NM_001181368.3"/>
</dbReference>
<dbReference type="PDB" id="3W15">
    <property type="method" value="X-ray"/>
    <property type="resolution" value="1.80 A"/>
    <property type="chains" value="B=190-288"/>
</dbReference>
<dbReference type="PDBsum" id="3W15"/>
<dbReference type="SMR" id="P50091"/>
<dbReference type="BioGRID" id="33491">
    <property type="interactions" value="100"/>
</dbReference>
<dbReference type="ComplexPortal" id="CPX-1906">
    <property type="entry name" value="Peroxisomal PEX7-PEX21 receptor complex"/>
</dbReference>
<dbReference type="DIP" id="DIP-1503N"/>
<dbReference type="FunCoup" id="P50091">
    <property type="interactions" value="49"/>
</dbReference>
<dbReference type="IntAct" id="P50091">
    <property type="interactions" value="8"/>
</dbReference>
<dbReference type="MINT" id="P50091"/>
<dbReference type="STRING" id="4932.YGR239C"/>
<dbReference type="TCDB" id="3.A.20.1.5">
    <property type="family name" value="the peroxisomal protein importer (ppi) family"/>
</dbReference>
<dbReference type="iPTMnet" id="P50091"/>
<dbReference type="PaxDb" id="4932-YGR239C"/>
<dbReference type="PeptideAtlas" id="P50091"/>
<dbReference type="EnsemblFungi" id="YGR239C_mRNA">
    <property type="protein sequence ID" value="YGR239C"/>
    <property type="gene ID" value="YGR239C"/>
</dbReference>
<dbReference type="GeneID" id="853154"/>
<dbReference type="KEGG" id="sce:YGR239C"/>
<dbReference type="AGR" id="SGD:S000003471"/>
<dbReference type="SGD" id="S000003471">
    <property type="gene designation" value="PEX21"/>
</dbReference>
<dbReference type="VEuPathDB" id="FungiDB:YGR239C"/>
<dbReference type="eggNOG" id="ENOG502S8JP">
    <property type="taxonomic scope" value="Eukaryota"/>
</dbReference>
<dbReference type="HOGENOM" id="CLU_078821_0_0_1"/>
<dbReference type="InParanoid" id="P50091"/>
<dbReference type="OMA" id="NENSTIM"/>
<dbReference type="OrthoDB" id="4035272at2759"/>
<dbReference type="BioCyc" id="YEAST:G3O-30917-MONOMER"/>
<dbReference type="BioGRID-ORCS" id="853154">
    <property type="hits" value="0 hits in 10 CRISPR screens"/>
</dbReference>
<dbReference type="PRO" id="PR:P50091"/>
<dbReference type="Proteomes" id="UP000002311">
    <property type="component" value="Chromosome VII"/>
</dbReference>
<dbReference type="RNAct" id="P50091">
    <property type="molecule type" value="protein"/>
</dbReference>
<dbReference type="GO" id="GO:0062137">
    <property type="term" value="C:cargo receptor complex"/>
    <property type="evidence" value="ECO:0000353"/>
    <property type="project" value="ComplexPortal"/>
</dbReference>
<dbReference type="GO" id="GO:0005737">
    <property type="term" value="C:cytoplasm"/>
    <property type="evidence" value="ECO:0007005"/>
    <property type="project" value="SGD"/>
</dbReference>
<dbReference type="GO" id="GO:0005829">
    <property type="term" value="C:cytosol"/>
    <property type="evidence" value="ECO:0000314"/>
    <property type="project" value="SGD"/>
</dbReference>
<dbReference type="GO" id="GO:0005778">
    <property type="term" value="C:peroxisomal membrane"/>
    <property type="evidence" value="ECO:0000250"/>
    <property type="project" value="ComplexPortal"/>
</dbReference>
<dbReference type="GO" id="GO:0005777">
    <property type="term" value="C:peroxisome"/>
    <property type="evidence" value="ECO:0000314"/>
    <property type="project" value="SGD"/>
</dbReference>
<dbReference type="GO" id="GO:0140597">
    <property type="term" value="F:protein carrier chaperone"/>
    <property type="evidence" value="ECO:0000314"/>
    <property type="project" value="UniProtKB"/>
</dbReference>
<dbReference type="GO" id="GO:0016558">
    <property type="term" value="P:protein import into peroxisome matrix"/>
    <property type="evidence" value="ECO:0000314"/>
    <property type="project" value="UniProtKB"/>
</dbReference>
<dbReference type="Gene3D" id="6.10.280.230">
    <property type="match status" value="1"/>
</dbReference>
<dbReference type="InterPro" id="IPR056940">
    <property type="entry name" value="PEX18_PEX21_C"/>
</dbReference>
<dbReference type="Pfam" id="PF25098">
    <property type="entry name" value="PEX18_PEX21_C"/>
    <property type="match status" value="1"/>
</dbReference>
<protein>
    <recommendedName>
        <fullName evidence="10">Peroxisomal protein PEX21</fullName>
    </recommendedName>
    <alternativeName>
        <fullName evidence="10">Peroxin-21</fullName>
    </alternativeName>
</protein>
<organism>
    <name type="scientific">Saccharomyces cerevisiae (strain ATCC 204508 / S288c)</name>
    <name type="common">Baker's yeast</name>
    <dbReference type="NCBI Taxonomy" id="559292"/>
    <lineage>
        <taxon>Eukaryota</taxon>
        <taxon>Fungi</taxon>
        <taxon>Dikarya</taxon>
        <taxon>Ascomycota</taxon>
        <taxon>Saccharomycotina</taxon>
        <taxon>Saccharomycetes</taxon>
        <taxon>Saccharomycetales</taxon>
        <taxon>Saccharomycetaceae</taxon>
        <taxon>Saccharomyces</taxon>
    </lineage>
</organism>